<sequence length="449" mass="49371">MGKEKVHINIVVIGHVDSGKSTTTGHLIYKLGGIDKRVIERFEKEAAEMNKRSFKYAWVLDKLKAERERGITIDIALWKFETTKYYCTVIDAPGHRDFIKNMITGTSQADCAVLIIDSTTGGFEAGISKDGQTREHALLAFTLGVKQMICCCNKMDATTPKYSKARYDEIVKEVSSYLKKVGYNPDKIPFVPISGFEGDNMIERSTNLDWYKGPTLLEALDQIQEPKRPSDKPLRLPLQDVYKIGGIGTVPVGRVETGILKPGMVVTFGPTGLTTEVKSVEMHHEALQEALPGDNVGFNVKNVAVKDLKRGIVASNSKDDPAKEAANFTSQVIIMNHPGQIGNGYAPVLDCHTSHIAVKFAEILTKIDRRSGKELEKEPKFLKNGDAGFVKMIPTKPMVVETFSAYPPLGRFAVRDMRQTVAVGVIKSVEKKDPSGAKVTKSAAKKGGK</sequence>
<protein>
    <recommendedName>
        <fullName>Elongation factor 1-alpha</fullName>
        <shortName>EF-1-alpha</shortName>
    </recommendedName>
</protein>
<evidence type="ECO:0000250" key="1"/>
<evidence type="ECO:0000250" key="2">
    <source>
        <dbReference type="UniProtKB" id="Q8GTY0"/>
    </source>
</evidence>
<evidence type="ECO:0000305" key="3"/>
<organism>
    <name type="scientific">Manihot esculenta</name>
    <name type="common">Cassava</name>
    <name type="synonym">Jatropha manihot</name>
    <dbReference type="NCBI Taxonomy" id="3983"/>
    <lineage>
        <taxon>Eukaryota</taxon>
        <taxon>Viridiplantae</taxon>
        <taxon>Streptophyta</taxon>
        <taxon>Embryophyta</taxon>
        <taxon>Tracheophyta</taxon>
        <taxon>Spermatophyta</taxon>
        <taxon>Magnoliopsida</taxon>
        <taxon>eudicotyledons</taxon>
        <taxon>Gunneridae</taxon>
        <taxon>Pentapetalae</taxon>
        <taxon>rosids</taxon>
        <taxon>fabids</taxon>
        <taxon>Malpighiales</taxon>
        <taxon>Euphorbiaceae</taxon>
        <taxon>Crotonoideae</taxon>
        <taxon>Manihoteae</taxon>
        <taxon>Manihot</taxon>
    </lineage>
</organism>
<feature type="chain" id="PRO_0000090940" description="Elongation factor 1-alpha">
    <location>
        <begin position="1"/>
        <end position="449"/>
    </location>
</feature>
<feature type="domain" description="tr-type G">
    <location>
        <begin position="5"/>
        <end position="230"/>
    </location>
</feature>
<feature type="region of interest" description="G1" evidence="1">
    <location>
        <begin position="14"/>
        <end position="21"/>
    </location>
</feature>
<feature type="region of interest" description="G2" evidence="1">
    <location>
        <begin position="70"/>
        <end position="74"/>
    </location>
</feature>
<feature type="region of interest" description="G3" evidence="1">
    <location>
        <begin position="91"/>
        <end position="94"/>
    </location>
</feature>
<feature type="region of interest" description="G4" evidence="1">
    <location>
        <begin position="153"/>
        <end position="156"/>
    </location>
</feature>
<feature type="region of interest" description="G5" evidence="1">
    <location>
        <begin position="194"/>
        <end position="196"/>
    </location>
</feature>
<feature type="binding site" evidence="1">
    <location>
        <begin position="14"/>
        <end position="21"/>
    </location>
    <ligand>
        <name>GTP</name>
        <dbReference type="ChEBI" id="CHEBI:37565"/>
    </ligand>
</feature>
<feature type="binding site" evidence="1">
    <location>
        <begin position="91"/>
        <end position="95"/>
    </location>
    <ligand>
        <name>GTP</name>
        <dbReference type="ChEBI" id="CHEBI:37565"/>
    </ligand>
</feature>
<feature type="binding site" evidence="1">
    <location>
        <begin position="153"/>
        <end position="156"/>
    </location>
    <ligand>
        <name>GTP</name>
        <dbReference type="ChEBI" id="CHEBI:37565"/>
    </ligand>
</feature>
<feature type="modified residue" description="N6,N6-dimethyllysine" evidence="2">
    <location>
        <position position="55"/>
    </location>
</feature>
<feature type="modified residue" description="N6,N6,N6-trimethyllysine" evidence="2">
    <location>
        <position position="79"/>
    </location>
</feature>
<feature type="modified residue" description="N6,N6,N6-trimethyllysine" evidence="2">
    <location>
        <position position="187"/>
    </location>
</feature>
<feature type="modified residue" description="N6-methyllysine" evidence="2">
    <location>
        <position position="261"/>
    </location>
</feature>
<feature type="modified residue" description="5-glutamyl glycerylphosphorylethanolamine" evidence="1">
    <location>
        <position position="289"/>
    </location>
</feature>
<feature type="modified residue" description="N6,N6,N6-trimethyllysine" evidence="2">
    <location>
        <position position="306"/>
    </location>
</feature>
<feature type="modified residue" description="5-glutamyl glycerylphosphorylethanolamine" evidence="1">
    <location>
        <position position="362"/>
    </location>
</feature>
<feature type="modified residue" description="N6,N6,N6-trimethyllysine" evidence="2">
    <location>
        <position position="396"/>
    </location>
</feature>
<comment type="function">
    <text>This protein promotes the GTP-dependent binding of aminoacyl-tRNA to the A-site of ribosomes during protein biosynthesis.</text>
</comment>
<comment type="subcellular location">
    <subcellularLocation>
        <location>Cytoplasm</location>
    </subcellularLocation>
</comment>
<comment type="similarity">
    <text evidence="3">Belongs to the TRAFAC class translation factor GTPase superfamily. Classic translation factor GTPase family. EF-Tu/EF-1A subfamily.</text>
</comment>
<reference key="1">
    <citation type="online journal article" date="1998" name="Plant Gene Register">
        <title>An elongation factor 1-alpha gene from cassava (Manihot esculenta Crantz.).</title>
        <authorList>
            <person name="Suhandono S."/>
            <person name="Hughes J."/>
            <person name="Brown K."/>
            <person name="Sirju-Charan G."/>
            <person name="Hughes M.A."/>
        </authorList>
        <locator>PGR98-052</locator>
    </citation>
    <scope>NUCLEOTIDE SEQUENCE [GENOMIC DNA]</scope>
    <source>
        <strain>cv. MBRA 534</strain>
    </source>
</reference>
<name>EF1A_MANES</name>
<gene>
    <name type="primary">EF1</name>
</gene>
<keyword id="KW-0963">Cytoplasm</keyword>
<keyword id="KW-0251">Elongation factor</keyword>
<keyword id="KW-0342">GTP-binding</keyword>
<keyword id="KW-0488">Methylation</keyword>
<keyword id="KW-0547">Nucleotide-binding</keyword>
<keyword id="KW-0597">Phosphoprotein</keyword>
<keyword id="KW-0648">Protein biosynthesis</keyword>
<dbReference type="EMBL" id="AF041463">
    <property type="protein sequence ID" value="AAC39447.1"/>
    <property type="molecule type" value="Genomic_DNA"/>
</dbReference>
<dbReference type="SMR" id="O49169"/>
<dbReference type="GO" id="GO:0005737">
    <property type="term" value="C:cytoplasm"/>
    <property type="evidence" value="ECO:0007669"/>
    <property type="project" value="UniProtKB-SubCell"/>
</dbReference>
<dbReference type="GO" id="GO:0005525">
    <property type="term" value="F:GTP binding"/>
    <property type="evidence" value="ECO:0007669"/>
    <property type="project" value="UniProtKB-KW"/>
</dbReference>
<dbReference type="GO" id="GO:0003924">
    <property type="term" value="F:GTPase activity"/>
    <property type="evidence" value="ECO:0007669"/>
    <property type="project" value="InterPro"/>
</dbReference>
<dbReference type="GO" id="GO:0003746">
    <property type="term" value="F:translation elongation factor activity"/>
    <property type="evidence" value="ECO:0007669"/>
    <property type="project" value="UniProtKB-KW"/>
</dbReference>
<dbReference type="CDD" id="cd01883">
    <property type="entry name" value="EF1_alpha"/>
    <property type="match status" value="1"/>
</dbReference>
<dbReference type="CDD" id="cd03693">
    <property type="entry name" value="EF1_alpha_II"/>
    <property type="match status" value="1"/>
</dbReference>
<dbReference type="CDD" id="cd03705">
    <property type="entry name" value="EF1_alpha_III"/>
    <property type="match status" value="1"/>
</dbReference>
<dbReference type="FunFam" id="2.40.30.10:FF:000003">
    <property type="entry name" value="Elongation factor 1-alpha"/>
    <property type="match status" value="1"/>
</dbReference>
<dbReference type="FunFam" id="2.40.30.10:FF:000005">
    <property type="entry name" value="Elongation factor 1-alpha"/>
    <property type="match status" value="1"/>
</dbReference>
<dbReference type="FunFam" id="3.40.50.300:FF:000255">
    <property type="entry name" value="Elongation factor 1-alpha"/>
    <property type="match status" value="1"/>
</dbReference>
<dbReference type="Gene3D" id="3.40.50.300">
    <property type="entry name" value="P-loop containing nucleotide triphosphate hydrolases"/>
    <property type="match status" value="1"/>
</dbReference>
<dbReference type="Gene3D" id="2.40.30.10">
    <property type="entry name" value="Translation factors"/>
    <property type="match status" value="2"/>
</dbReference>
<dbReference type="HAMAP" id="MF_00118_A">
    <property type="entry name" value="EF_Tu_A"/>
    <property type="match status" value="1"/>
</dbReference>
<dbReference type="InterPro" id="IPR004161">
    <property type="entry name" value="EFTu-like_2"/>
</dbReference>
<dbReference type="InterPro" id="IPR031157">
    <property type="entry name" value="G_TR_CS"/>
</dbReference>
<dbReference type="InterPro" id="IPR054696">
    <property type="entry name" value="GTP-eEF1A_C"/>
</dbReference>
<dbReference type="InterPro" id="IPR027417">
    <property type="entry name" value="P-loop_NTPase"/>
</dbReference>
<dbReference type="InterPro" id="IPR000795">
    <property type="entry name" value="T_Tr_GTP-bd_dom"/>
</dbReference>
<dbReference type="InterPro" id="IPR050100">
    <property type="entry name" value="TRAFAC_GTPase_members"/>
</dbReference>
<dbReference type="InterPro" id="IPR009000">
    <property type="entry name" value="Transl_B-barrel_sf"/>
</dbReference>
<dbReference type="InterPro" id="IPR009001">
    <property type="entry name" value="Transl_elong_EF1A/Init_IF2_C"/>
</dbReference>
<dbReference type="InterPro" id="IPR004539">
    <property type="entry name" value="Transl_elong_EF1A_euk/arc"/>
</dbReference>
<dbReference type="NCBIfam" id="TIGR00483">
    <property type="entry name" value="EF-1_alpha"/>
    <property type="match status" value="1"/>
</dbReference>
<dbReference type="NCBIfam" id="NF008969">
    <property type="entry name" value="PRK12317.1"/>
    <property type="match status" value="1"/>
</dbReference>
<dbReference type="PANTHER" id="PTHR23115">
    <property type="entry name" value="TRANSLATION FACTOR"/>
    <property type="match status" value="1"/>
</dbReference>
<dbReference type="Pfam" id="PF22594">
    <property type="entry name" value="GTP-eEF1A_C"/>
    <property type="match status" value="1"/>
</dbReference>
<dbReference type="Pfam" id="PF00009">
    <property type="entry name" value="GTP_EFTU"/>
    <property type="match status" value="1"/>
</dbReference>
<dbReference type="Pfam" id="PF03144">
    <property type="entry name" value="GTP_EFTU_D2"/>
    <property type="match status" value="1"/>
</dbReference>
<dbReference type="PRINTS" id="PR00315">
    <property type="entry name" value="ELONGATNFCT"/>
</dbReference>
<dbReference type="SUPFAM" id="SSF50465">
    <property type="entry name" value="EF-Tu/eEF-1alpha/eIF2-gamma C-terminal domain"/>
    <property type="match status" value="1"/>
</dbReference>
<dbReference type="SUPFAM" id="SSF52540">
    <property type="entry name" value="P-loop containing nucleoside triphosphate hydrolases"/>
    <property type="match status" value="1"/>
</dbReference>
<dbReference type="SUPFAM" id="SSF50447">
    <property type="entry name" value="Translation proteins"/>
    <property type="match status" value="1"/>
</dbReference>
<dbReference type="PROSITE" id="PS00301">
    <property type="entry name" value="G_TR_1"/>
    <property type="match status" value="1"/>
</dbReference>
<dbReference type="PROSITE" id="PS51722">
    <property type="entry name" value="G_TR_2"/>
    <property type="match status" value="1"/>
</dbReference>
<proteinExistence type="inferred from homology"/>
<accession>O49169</accession>